<organism>
    <name type="scientific">Sus scrofa</name>
    <name type="common">Pig</name>
    <dbReference type="NCBI Taxonomy" id="9823"/>
    <lineage>
        <taxon>Eukaryota</taxon>
        <taxon>Metazoa</taxon>
        <taxon>Chordata</taxon>
        <taxon>Craniata</taxon>
        <taxon>Vertebrata</taxon>
        <taxon>Euteleostomi</taxon>
        <taxon>Mammalia</taxon>
        <taxon>Eutheria</taxon>
        <taxon>Laurasiatheria</taxon>
        <taxon>Artiodactyla</taxon>
        <taxon>Suina</taxon>
        <taxon>Suidae</taxon>
        <taxon>Sus</taxon>
    </lineage>
</organism>
<reference key="1">
    <citation type="journal article" date="1996" name="Mamm. Genome">
        <title>Evaluation and characterization of a porcine small intestine cDNA library: analysis of 839 clones.</title>
        <authorList>
            <person name="Winteroe A.K."/>
            <person name="Fredholm M."/>
            <person name="Davies W."/>
        </authorList>
    </citation>
    <scope>NUCLEOTIDE SEQUENCE [LARGE SCALE MRNA]</scope>
    <source>
        <tissue>Small intestine</tissue>
    </source>
</reference>
<name>LEG2_PIG</name>
<proteinExistence type="evidence at transcript level"/>
<dbReference type="EMBL" id="F14575">
    <property type="protein sequence ID" value="CAA23133.1"/>
    <property type="molecule type" value="mRNA"/>
</dbReference>
<dbReference type="FunCoup" id="Q29373">
    <property type="interactions" value="84"/>
</dbReference>
<dbReference type="STRING" id="9823.ENSSSCP00000021328"/>
<dbReference type="PaxDb" id="9823-ENSSSCP00000021328"/>
<dbReference type="PeptideAtlas" id="Q29373"/>
<dbReference type="eggNOG" id="KOG3587">
    <property type="taxonomic scope" value="Eukaryota"/>
</dbReference>
<dbReference type="InParanoid" id="Q29373"/>
<dbReference type="Proteomes" id="UP000008227">
    <property type="component" value="Unplaced"/>
</dbReference>
<dbReference type="Proteomes" id="UP000314985">
    <property type="component" value="Unplaced"/>
</dbReference>
<dbReference type="Proteomes" id="UP000694570">
    <property type="component" value="Unplaced"/>
</dbReference>
<dbReference type="Proteomes" id="UP000694571">
    <property type="component" value="Unplaced"/>
</dbReference>
<dbReference type="Proteomes" id="UP000694720">
    <property type="component" value="Unplaced"/>
</dbReference>
<dbReference type="Proteomes" id="UP000694722">
    <property type="component" value="Unplaced"/>
</dbReference>
<dbReference type="Proteomes" id="UP000694723">
    <property type="component" value="Unplaced"/>
</dbReference>
<dbReference type="Proteomes" id="UP000694724">
    <property type="component" value="Unplaced"/>
</dbReference>
<dbReference type="Proteomes" id="UP000694725">
    <property type="component" value="Unplaced"/>
</dbReference>
<dbReference type="Proteomes" id="UP000694726">
    <property type="component" value="Unplaced"/>
</dbReference>
<dbReference type="Proteomes" id="UP000694727">
    <property type="component" value="Unplaced"/>
</dbReference>
<dbReference type="Proteomes" id="UP000694728">
    <property type="component" value="Unplaced"/>
</dbReference>
<dbReference type="GO" id="GO:0030246">
    <property type="term" value="F:carbohydrate binding"/>
    <property type="evidence" value="ECO:0000318"/>
    <property type="project" value="GO_Central"/>
</dbReference>
<dbReference type="GO" id="GO:0016936">
    <property type="term" value="F:galactoside binding"/>
    <property type="evidence" value="ECO:0000318"/>
    <property type="project" value="GO_Central"/>
</dbReference>
<dbReference type="CDD" id="cd00070">
    <property type="entry name" value="GLECT"/>
    <property type="match status" value="1"/>
</dbReference>
<dbReference type="FunFam" id="2.60.120.200:FF:000021">
    <property type="entry name" value="Galectin"/>
    <property type="match status" value="1"/>
</dbReference>
<dbReference type="Gene3D" id="2.60.120.200">
    <property type="match status" value="1"/>
</dbReference>
<dbReference type="InterPro" id="IPR013320">
    <property type="entry name" value="ConA-like_dom_sf"/>
</dbReference>
<dbReference type="InterPro" id="IPR044156">
    <property type="entry name" value="Galectin-like"/>
</dbReference>
<dbReference type="InterPro" id="IPR001079">
    <property type="entry name" value="Galectin_CRD"/>
</dbReference>
<dbReference type="PANTHER" id="PTHR11346">
    <property type="entry name" value="GALECTIN"/>
    <property type="match status" value="1"/>
</dbReference>
<dbReference type="PANTHER" id="PTHR11346:SF104">
    <property type="entry name" value="GALECTIN-2"/>
    <property type="match status" value="1"/>
</dbReference>
<dbReference type="Pfam" id="PF00337">
    <property type="entry name" value="Gal-bind_lectin"/>
    <property type="match status" value="1"/>
</dbReference>
<dbReference type="SMART" id="SM00908">
    <property type="entry name" value="Gal-bind_lectin"/>
    <property type="match status" value="1"/>
</dbReference>
<dbReference type="SMART" id="SM00276">
    <property type="entry name" value="GLECT"/>
    <property type="match status" value="1"/>
</dbReference>
<dbReference type="SUPFAM" id="SSF49899">
    <property type="entry name" value="Concanavalin A-like lectins/glucanases"/>
    <property type="match status" value="1"/>
</dbReference>
<dbReference type="PROSITE" id="PS51304">
    <property type="entry name" value="GALECTIN"/>
    <property type="match status" value="1"/>
</dbReference>
<evidence type="ECO:0000250" key="1"/>
<evidence type="ECO:0000255" key="2"/>
<evidence type="ECO:0000255" key="3">
    <source>
        <dbReference type="PROSITE-ProRule" id="PRU00639"/>
    </source>
</evidence>
<protein>
    <recommendedName>
        <fullName>Galectin-2</fullName>
        <shortName>Gal-2</shortName>
    </recommendedName>
</protein>
<accession>Q29373</accession>
<sequence>MSGKVEIMNMDMKVGKTLKIKGKXDDDADGFXINLGQGTDKLALHFXPRFGESTIVCNXRDGNXWGKEQRDSHMXFXPGSEVKLIVTFEEDGFKVKLPDGHQLTFPNRLGYSHLRYLSVQGGF</sequence>
<comment type="function">
    <text evidence="1">This protein binds beta-galactoside. Its physiological function is not yet known (By similarity).</text>
</comment>
<comment type="subunit">
    <text evidence="1">Homodimer.</text>
</comment>
<feature type="chain" id="PRO_0000076926" description="Galectin-2">
    <location>
        <begin position="1"/>
        <end position="123" status="greater than"/>
    </location>
</feature>
<feature type="domain" description="Galectin" evidence="3">
    <location>
        <begin position="4"/>
        <end position="123" status="greater than"/>
    </location>
</feature>
<feature type="binding site" evidence="2">
    <location>
        <begin position="65"/>
        <end position="71"/>
    </location>
    <ligand>
        <name>a beta-D-galactoside</name>
        <dbReference type="ChEBI" id="CHEBI:28034"/>
    </ligand>
</feature>
<feature type="non-terminal residue">
    <location>
        <position position="123"/>
    </location>
</feature>
<keyword id="KW-0430">Lectin</keyword>
<keyword id="KW-1185">Reference proteome</keyword>
<gene>
    <name type="primary">LGALS2</name>
</gene>